<organism>
    <name type="scientific">Cronobacter sakazakii (strain ATCC BAA-894)</name>
    <name type="common">Enterobacter sakazakii</name>
    <dbReference type="NCBI Taxonomy" id="290339"/>
    <lineage>
        <taxon>Bacteria</taxon>
        <taxon>Pseudomonadati</taxon>
        <taxon>Pseudomonadota</taxon>
        <taxon>Gammaproteobacteria</taxon>
        <taxon>Enterobacterales</taxon>
        <taxon>Enterobacteriaceae</taxon>
        <taxon>Cronobacter</taxon>
    </lineage>
</organism>
<name>SYM_CROS8</name>
<feature type="chain" id="PRO_0000331816" description="Methionine--tRNA ligase">
    <location>
        <begin position="1"/>
        <end position="677"/>
    </location>
</feature>
<feature type="domain" description="tRNA-binding" evidence="1">
    <location>
        <begin position="575"/>
        <end position="677"/>
    </location>
</feature>
<feature type="short sequence motif" description="'HIGH' region">
    <location>
        <begin position="15"/>
        <end position="25"/>
    </location>
</feature>
<feature type="short sequence motif" description="'KMSKS' region">
    <location>
        <begin position="333"/>
        <end position="337"/>
    </location>
</feature>
<feature type="binding site" evidence="1">
    <location>
        <position position="146"/>
    </location>
    <ligand>
        <name>Zn(2+)</name>
        <dbReference type="ChEBI" id="CHEBI:29105"/>
    </ligand>
</feature>
<feature type="binding site" evidence="1">
    <location>
        <position position="149"/>
    </location>
    <ligand>
        <name>Zn(2+)</name>
        <dbReference type="ChEBI" id="CHEBI:29105"/>
    </ligand>
</feature>
<feature type="binding site" evidence="1">
    <location>
        <position position="159"/>
    </location>
    <ligand>
        <name>Zn(2+)</name>
        <dbReference type="ChEBI" id="CHEBI:29105"/>
    </ligand>
</feature>
<feature type="binding site" evidence="1">
    <location>
        <position position="162"/>
    </location>
    <ligand>
        <name>Zn(2+)</name>
        <dbReference type="ChEBI" id="CHEBI:29105"/>
    </ligand>
</feature>
<feature type="binding site" evidence="1">
    <location>
        <position position="336"/>
    </location>
    <ligand>
        <name>ATP</name>
        <dbReference type="ChEBI" id="CHEBI:30616"/>
    </ligand>
</feature>
<gene>
    <name evidence="1" type="primary">metG</name>
    <name type="ordered locus">ESA_01115</name>
</gene>
<sequence length="677" mass="75922">MTQVAKKILVTCALPYANGSIHLGHMLEHIQADVWVRYQRMRGHEVNFICADDAHGTPIMLKAQQLGITPEQMIAEMSKEHQTDFAGFNISYDNYHSTHSDENRVLSELIYTRLKENGFIKNRTISQLYDPEKGMFLPDRFVKGTCPKCKSPDQYGDNCEVCGATYSPTELIEPKSVVSGATPVMRDSEHFFFDLPSFSEMLQAWTRSGALQEQVANKMQEWFESGLQQWDISRDAPYFGFEIPNAPGKYFYVWLDAPIGYMGSFKNLCDKRGDTVSFDEYWKKDSDAELYHVIGKDIVYFHSLFWPAMLEGSGFRKPTNLFVHGYVTVNGAKMSKSRGTFIKASTWLNHFDADSLRYYYAAKLSSRIDDIDLNLEDFVQRVNADIVNKVVNLASRNAGFIAKRFDGELAAELADPALYQTFTDAAAVIGEAWESREFGKAIREIMALADLANRYVDEQAPWVVAKQEGRDADLQAICSMGINLFRVLMTYLKPVLPELCARAEAFLNVELTWDGVNAPLLGHKVNSFKALYNRIEMKQVEALVEASKEEVKAAAAPVTGELAENPIQETITFDDFAKIDLRVALIENAEFVDGSDKLLRLTLDLDGEKRNVFSGIRSAYPDPQALIGRLTVMVANLAPRKMRFGISEGMVMAAGPGGKDIFLLSPDSGAKPGQQVK</sequence>
<evidence type="ECO:0000255" key="1">
    <source>
        <dbReference type="HAMAP-Rule" id="MF_00098"/>
    </source>
</evidence>
<evidence type="ECO:0000305" key="2"/>
<comment type="function">
    <text evidence="1">Is required not only for elongation of protein synthesis but also for the initiation of all mRNA translation through initiator tRNA(fMet) aminoacylation.</text>
</comment>
<comment type="catalytic activity">
    <reaction evidence="1">
        <text>tRNA(Met) + L-methionine + ATP = L-methionyl-tRNA(Met) + AMP + diphosphate</text>
        <dbReference type="Rhea" id="RHEA:13481"/>
        <dbReference type="Rhea" id="RHEA-COMP:9667"/>
        <dbReference type="Rhea" id="RHEA-COMP:9698"/>
        <dbReference type="ChEBI" id="CHEBI:30616"/>
        <dbReference type="ChEBI" id="CHEBI:33019"/>
        <dbReference type="ChEBI" id="CHEBI:57844"/>
        <dbReference type="ChEBI" id="CHEBI:78442"/>
        <dbReference type="ChEBI" id="CHEBI:78530"/>
        <dbReference type="ChEBI" id="CHEBI:456215"/>
        <dbReference type="EC" id="6.1.1.10"/>
    </reaction>
</comment>
<comment type="cofactor">
    <cofactor evidence="1">
        <name>Zn(2+)</name>
        <dbReference type="ChEBI" id="CHEBI:29105"/>
    </cofactor>
    <text evidence="1">Binds 1 zinc ion per subunit.</text>
</comment>
<comment type="subunit">
    <text evidence="1">Homodimer.</text>
</comment>
<comment type="subcellular location">
    <subcellularLocation>
        <location evidence="1">Cytoplasm</location>
    </subcellularLocation>
</comment>
<comment type="similarity">
    <text evidence="1">Belongs to the class-I aminoacyl-tRNA synthetase family. MetG type 1 subfamily.</text>
</comment>
<comment type="sequence caution" evidence="2">
    <conflict type="erroneous initiation">
        <sequence resource="EMBL-CDS" id="ABU76383"/>
    </conflict>
</comment>
<keyword id="KW-0030">Aminoacyl-tRNA synthetase</keyword>
<keyword id="KW-0067">ATP-binding</keyword>
<keyword id="KW-0963">Cytoplasm</keyword>
<keyword id="KW-0436">Ligase</keyword>
<keyword id="KW-0479">Metal-binding</keyword>
<keyword id="KW-0547">Nucleotide-binding</keyword>
<keyword id="KW-0648">Protein biosynthesis</keyword>
<keyword id="KW-1185">Reference proteome</keyword>
<keyword id="KW-0694">RNA-binding</keyword>
<keyword id="KW-0820">tRNA-binding</keyword>
<keyword id="KW-0862">Zinc</keyword>
<dbReference type="EC" id="6.1.1.10" evidence="1"/>
<dbReference type="EMBL" id="CP000783">
    <property type="protein sequence ID" value="ABU76383.1"/>
    <property type="status" value="ALT_INIT"/>
    <property type="molecule type" value="Genomic_DNA"/>
</dbReference>
<dbReference type="RefSeq" id="WP_041460452.1">
    <property type="nucleotide sequence ID" value="NC_009778.1"/>
</dbReference>
<dbReference type="SMR" id="A7MHL3"/>
<dbReference type="KEGG" id="esa:ESA_01115"/>
<dbReference type="PATRIC" id="fig|290339.8.peg.987"/>
<dbReference type="HOGENOM" id="CLU_009710_7_0_6"/>
<dbReference type="Proteomes" id="UP000000260">
    <property type="component" value="Chromosome"/>
</dbReference>
<dbReference type="GO" id="GO:0005829">
    <property type="term" value="C:cytosol"/>
    <property type="evidence" value="ECO:0007669"/>
    <property type="project" value="TreeGrafter"/>
</dbReference>
<dbReference type="GO" id="GO:0005524">
    <property type="term" value="F:ATP binding"/>
    <property type="evidence" value="ECO:0007669"/>
    <property type="project" value="UniProtKB-UniRule"/>
</dbReference>
<dbReference type="GO" id="GO:0046872">
    <property type="term" value="F:metal ion binding"/>
    <property type="evidence" value="ECO:0007669"/>
    <property type="project" value="UniProtKB-KW"/>
</dbReference>
<dbReference type="GO" id="GO:0004825">
    <property type="term" value="F:methionine-tRNA ligase activity"/>
    <property type="evidence" value="ECO:0007669"/>
    <property type="project" value="UniProtKB-UniRule"/>
</dbReference>
<dbReference type="GO" id="GO:0000049">
    <property type="term" value="F:tRNA binding"/>
    <property type="evidence" value="ECO:0007669"/>
    <property type="project" value="UniProtKB-KW"/>
</dbReference>
<dbReference type="GO" id="GO:0006431">
    <property type="term" value="P:methionyl-tRNA aminoacylation"/>
    <property type="evidence" value="ECO:0007669"/>
    <property type="project" value="UniProtKB-UniRule"/>
</dbReference>
<dbReference type="CDD" id="cd07957">
    <property type="entry name" value="Anticodon_Ia_Met"/>
    <property type="match status" value="1"/>
</dbReference>
<dbReference type="CDD" id="cd00814">
    <property type="entry name" value="MetRS_core"/>
    <property type="match status" value="1"/>
</dbReference>
<dbReference type="CDD" id="cd02800">
    <property type="entry name" value="tRNA_bind_EcMetRS_like"/>
    <property type="match status" value="1"/>
</dbReference>
<dbReference type="FunFam" id="1.10.730.10:FF:000005">
    <property type="entry name" value="Methionine--tRNA ligase"/>
    <property type="match status" value="1"/>
</dbReference>
<dbReference type="FunFam" id="2.20.28.20:FF:000001">
    <property type="entry name" value="Methionine--tRNA ligase"/>
    <property type="match status" value="1"/>
</dbReference>
<dbReference type="FunFam" id="2.40.50.140:FF:000042">
    <property type="entry name" value="Methionine--tRNA ligase"/>
    <property type="match status" value="1"/>
</dbReference>
<dbReference type="Gene3D" id="3.40.50.620">
    <property type="entry name" value="HUPs"/>
    <property type="match status" value="1"/>
</dbReference>
<dbReference type="Gene3D" id="1.10.730.10">
    <property type="entry name" value="Isoleucyl-tRNA Synthetase, Domain 1"/>
    <property type="match status" value="1"/>
</dbReference>
<dbReference type="Gene3D" id="2.20.28.20">
    <property type="entry name" value="Methionyl-tRNA synthetase, Zn-domain"/>
    <property type="match status" value="1"/>
</dbReference>
<dbReference type="Gene3D" id="2.40.50.140">
    <property type="entry name" value="Nucleic acid-binding proteins"/>
    <property type="match status" value="1"/>
</dbReference>
<dbReference type="HAMAP" id="MF_00098">
    <property type="entry name" value="Met_tRNA_synth_type1"/>
    <property type="match status" value="1"/>
</dbReference>
<dbReference type="InterPro" id="IPR001412">
    <property type="entry name" value="aa-tRNA-synth_I_CS"/>
</dbReference>
<dbReference type="InterPro" id="IPR041872">
    <property type="entry name" value="Anticodon_Met"/>
</dbReference>
<dbReference type="InterPro" id="IPR004495">
    <property type="entry name" value="Met-tRNA-synth_bsu_C"/>
</dbReference>
<dbReference type="InterPro" id="IPR023458">
    <property type="entry name" value="Met-tRNA_ligase_1"/>
</dbReference>
<dbReference type="InterPro" id="IPR014758">
    <property type="entry name" value="Met-tRNA_synth"/>
</dbReference>
<dbReference type="InterPro" id="IPR015413">
    <property type="entry name" value="Methionyl/Leucyl_tRNA_Synth"/>
</dbReference>
<dbReference type="InterPro" id="IPR033911">
    <property type="entry name" value="MetRS_core"/>
</dbReference>
<dbReference type="InterPro" id="IPR029038">
    <property type="entry name" value="MetRS_Zn"/>
</dbReference>
<dbReference type="InterPro" id="IPR012340">
    <property type="entry name" value="NA-bd_OB-fold"/>
</dbReference>
<dbReference type="InterPro" id="IPR014729">
    <property type="entry name" value="Rossmann-like_a/b/a_fold"/>
</dbReference>
<dbReference type="InterPro" id="IPR002547">
    <property type="entry name" value="tRNA-bd_dom"/>
</dbReference>
<dbReference type="InterPro" id="IPR009080">
    <property type="entry name" value="tRNAsynth_Ia_anticodon-bd"/>
</dbReference>
<dbReference type="NCBIfam" id="TIGR00398">
    <property type="entry name" value="metG"/>
    <property type="match status" value="1"/>
</dbReference>
<dbReference type="NCBIfam" id="TIGR00399">
    <property type="entry name" value="metG_C_term"/>
    <property type="match status" value="1"/>
</dbReference>
<dbReference type="NCBIfam" id="NF001100">
    <property type="entry name" value="PRK00133.1"/>
    <property type="match status" value="1"/>
</dbReference>
<dbReference type="PANTHER" id="PTHR45765">
    <property type="entry name" value="METHIONINE--TRNA LIGASE"/>
    <property type="match status" value="1"/>
</dbReference>
<dbReference type="PANTHER" id="PTHR45765:SF1">
    <property type="entry name" value="METHIONINE--TRNA LIGASE, CYTOPLASMIC"/>
    <property type="match status" value="1"/>
</dbReference>
<dbReference type="Pfam" id="PF19303">
    <property type="entry name" value="Anticodon_3"/>
    <property type="match status" value="1"/>
</dbReference>
<dbReference type="Pfam" id="PF09334">
    <property type="entry name" value="tRNA-synt_1g"/>
    <property type="match status" value="1"/>
</dbReference>
<dbReference type="Pfam" id="PF01588">
    <property type="entry name" value="tRNA_bind"/>
    <property type="match status" value="1"/>
</dbReference>
<dbReference type="PRINTS" id="PR01041">
    <property type="entry name" value="TRNASYNTHMET"/>
</dbReference>
<dbReference type="SUPFAM" id="SSF47323">
    <property type="entry name" value="Anticodon-binding domain of a subclass of class I aminoacyl-tRNA synthetases"/>
    <property type="match status" value="1"/>
</dbReference>
<dbReference type="SUPFAM" id="SSF57770">
    <property type="entry name" value="Methionyl-tRNA synthetase (MetRS), Zn-domain"/>
    <property type="match status" value="1"/>
</dbReference>
<dbReference type="SUPFAM" id="SSF50249">
    <property type="entry name" value="Nucleic acid-binding proteins"/>
    <property type="match status" value="1"/>
</dbReference>
<dbReference type="SUPFAM" id="SSF52374">
    <property type="entry name" value="Nucleotidylyl transferase"/>
    <property type="match status" value="1"/>
</dbReference>
<dbReference type="PROSITE" id="PS00178">
    <property type="entry name" value="AA_TRNA_LIGASE_I"/>
    <property type="match status" value="1"/>
</dbReference>
<dbReference type="PROSITE" id="PS50886">
    <property type="entry name" value="TRBD"/>
    <property type="match status" value="1"/>
</dbReference>
<accession>A7MHL3</accession>
<protein>
    <recommendedName>
        <fullName evidence="1">Methionine--tRNA ligase</fullName>
        <ecNumber evidence="1">6.1.1.10</ecNumber>
    </recommendedName>
    <alternativeName>
        <fullName evidence="1">Methionyl-tRNA synthetase</fullName>
        <shortName evidence="1">MetRS</shortName>
    </alternativeName>
</protein>
<proteinExistence type="inferred from homology"/>
<reference key="1">
    <citation type="journal article" date="2010" name="PLoS ONE">
        <title>Genome sequence of Cronobacter sakazakii BAA-894 and comparative genomic hybridization analysis with other Cronobacter species.</title>
        <authorList>
            <person name="Kucerova E."/>
            <person name="Clifton S.W."/>
            <person name="Xia X.Q."/>
            <person name="Long F."/>
            <person name="Porwollik S."/>
            <person name="Fulton L."/>
            <person name="Fronick C."/>
            <person name="Minx P."/>
            <person name="Kyung K."/>
            <person name="Warren W."/>
            <person name="Fulton R."/>
            <person name="Feng D."/>
            <person name="Wollam A."/>
            <person name="Shah N."/>
            <person name="Bhonagiri V."/>
            <person name="Nash W.E."/>
            <person name="Hallsworth-Pepin K."/>
            <person name="Wilson R.K."/>
            <person name="McClelland M."/>
            <person name="Forsythe S.J."/>
        </authorList>
    </citation>
    <scope>NUCLEOTIDE SEQUENCE [LARGE SCALE GENOMIC DNA]</scope>
    <source>
        <strain>ATCC BAA-894</strain>
    </source>
</reference>